<protein>
    <recommendedName>
        <fullName evidence="1">Porphobilinogen deaminase</fullName>
        <shortName evidence="1">PBG</shortName>
        <ecNumber evidence="1">2.5.1.61</ecNumber>
    </recommendedName>
    <alternativeName>
        <fullName evidence="1">Hydroxymethylbilane synthase</fullName>
        <shortName evidence="1">HMBS</shortName>
    </alternativeName>
    <alternativeName>
        <fullName evidence="1">Pre-uroporphyrinogen synthase</fullName>
    </alternativeName>
</protein>
<gene>
    <name evidence="1" type="primary">hemC</name>
    <name type="ordered locus">Rxyl_1978</name>
</gene>
<keyword id="KW-0627">Porphyrin biosynthesis</keyword>
<keyword id="KW-1185">Reference proteome</keyword>
<keyword id="KW-0808">Transferase</keyword>
<evidence type="ECO:0000255" key="1">
    <source>
        <dbReference type="HAMAP-Rule" id="MF_00260"/>
    </source>
</evidence>
<comment type="function">
    <text evidence="1">Tetrapolymerization of the monopyrrole PBG into the hydroxymethylbilane pre-uroporphyrinogen in several discrete steps.</text>
</comment>
<comment type="catalytic activity">
    <reaction evidence="1">
        <text>4 porphobilinogen + H2O = hydroxymethylbilane + 4 NH4(+)</text>
        <dbReference type="Rhea" id="RHEA:13185"/>
        <dbReference type="ChEBI" id="CHEBI:15377"/>
        <dbReference type="ChEBI" id="CHEBI:28938"/>
        <dbReference type="ChEBI" id="CHEBI:57845"/>
        <dbReference type="ChEBI" id="CHEBI:58126"/>
        <dbReference type="EC" id="2.5.1.61"/>
    </reaction>
</comment>
<comment type="cofactor">
    <cofactor evidence="1">
        <name>dipyrromethane</name>
        <dbReference type="ChEBI" id="CHEBI:60342"/>
    </cofactor>
    <text evidence="1">Binds 1 dipyrromethane group covalently.</text>
</comment>
<comment type="pathway">
    <text evidence="1">Porphyrin-containing compound metabolism; protoporphyrin-IX biosynthesis; coproporphyrinogen-III from 5-aminolevulinate: step 2/4.</text>
</comment>
<comment type="subunit">
    <text evidence="1">Monomer.</text>
</comment>
<comment type="miscellaneous">
    <text evidence="1">The porphobilinogen subunits are added to the dipyrromethane group.</text>
</comment>
<comment type="similarity">
    <text evidence="1">Belongs to the HMBS family.</text>
</comment>
<organism>
    <name type="scientific">Rubrobacter xylanophilus (strain DSM 9941 / JCM 11954 / NBRC 16129 / PRD-1)</name>
    <dbReference type="NCBI Taxonomy" id="266117"/>
    <lineage>
        <taxon>Bacteria</taxon>
        <taxon>Bacillati</taxon>
        <taxon>Actinomycetota</taxon>
        <taxon>Rubrobacteria</taxon>
        <taxon>Rubrobacterales</taxon>
        <taxon>Rubrobacteraceae</taxon>
        <taxon>Rubrobacter</taxon>
    </lineage>
</organism>
<sequence length="305" mass="32035">MAGRLVLGTRGSPLALAQAEACAAGLRAAGFAVELRRIRTTSDRRPDDPLSVIDQRDVFTRQLDEALLAGEVDLAVHSMKDVPTEVPEGIVLAAVAGRADPSDALVSEGGWGVDGLPEGARVATSSLRRRAQLLHRRPDLRVVEIRGNVDTRIRKMRAGAAEAVVLARAGLVRLGLEVPHAVIPHDVLLPAVGQGALAVAVRRGDPRLEEIRRALNDPAAEREVAAERALLRALEGGCRVPVGARAVAGGRGVLLRGVVVSPDGAALCGGEERGEEPEEVGRRLAARLLERGAAGILGFVRGVKP</sequence>
<feature type="chain" id="PRO_1000114174" description="Porphobilinogen deaminase">
    <location>
        <begin position="1"/>
        <end position="305"/>
    </location>
</feature>
<feature type="modified residue" description="S-(dipyrrolylmethanemethyl)cysteine" evidence="1">
    <location>
        <position position="238"/>
    </location>
</feature>
<dbReference type="EC" id="2.5.1.61" evidence="1"/>
<dbReference type="EMBL" id="CP000386">
    <property type="protein sequence ID" value="ABG04925.1"/>
    <property type="molecule type" value="Genomic_DNA"/>
</dbReference>
<dbReference type="RefSeq" id="WP_011564940.1">
    <property type="nucleotide sequence ID" value="NC_008148.1"/>
</dbReference>
<dbReference type="SMR" id="Q1AUK3"/>
<dbReference type="STRING" id="266117.Rxyl_1978"/>
<dbReference type="KEGG" id="rxy:Rxyl_1978"/>
<dbReference type="eggNOG" id="COG0181">
    <property type="taxonomic scope" value="Bacteria"/>
</dbReference>
<dbReference type="HOGENOM" id="CLU_019704_0_2_11"/>
<dbReference type="OrthoDB" id="9810298at2"/>
<dbReference type="PhylomeDB" id="Q1AUK3"/>
<dbReference type="UniPathway" id="UPA00251">
    <property type="reaction ID" value="UER00319"/>
</dbReference>
<dbReference type="Proteomes" id="UP000006637">
    <property type="component" value="Chromosome"/>
</dbReference>
<dbReference type="GO" id="GO:0005737">
    <property type="term" value="C:cytoplasm"/>
    <property type="evidence" value="ECO:0007669"/>
    <property type="project" value="TreeGrafter"/>
</dbReference>
<dbReference type="GO" id="GO:0004418">
    <property type="term" value="F:hydroxymethylbilane synthase activity"/>
    <property type="evidence" value="ECO:0007669"/>
    <property type="project" value="UniProtKB-UniRule"/>
</dbReference>
<dbReference type="GO" id="GO:0006782">
    <property type="term" value="P:protoporphyrinogen IX biosynthetic process"/>
    <property type="evidence" value="ECO:0007669"/>
    <property type="project" value="UniProtKB-UniRule"/>
</dbReference>
<dbReference type="FunFam" id="3.40.190.10:FF:000005">
    <property type="entry name" value="Porphobilinogen deaminase"/>
    <property type="match status" value="1"/>
</dbReference>
<dbReference type="Gene3D" id="3.40.190.10">
    <property type="entry name" value="Periplasmic binding protein-like II"/>
    <property type="match status" value="2"/>
</dbReference>
<dbReference type="Gene3D" id="3.30.160.40">
    <property type="entry name" value="Porphobilinogen deaminase, C-terminal domain"/>
    <property type="match status" value="1"/>
</dbReference>
<dbReference type="HAMAP" id="MF_00260">
    <property type="entry name" value="Porphobil_deam"/>
    <property type="match status" value="1"/>
</dbReference>
<dbReference type="InterPro" id="IPR000860">
    <property type="entry name" value="HemC"/>
</dbReference>
<dbReference type="InterPro" id="IPR022419">
    <property type="entry name" value="Porphobilin_deaminase_cofac_BS"/>
</dbReference>
<dbReference type="InterPro" id="IPR022417">
    <property type="entry name" value="Porphobilin_deaminase_N"/>
</dbReference>
<dbReference type="InterPro" id="IPR022418">
    <property type="entry name" value="Porphobilinogen_deaminase_C"/>
</dbReference>
<dbReference type="InterPro" id="IPR036803">
    <property type="entry name" value="Porphobilinogen_deaminase_C_sf"/>
</dbReference>
<dbReference type="NCBIfam" id="TIGR00212">
    <property type="entry name" value="hemC"/>
    <property type="match status" value="1"/>
</dbReference>
<dbReference type="PANTHER" id="PTHR11557">
    <property type="entry name" value="PORPHOBILINOGEN DEAMINASE"/>
    <property type="match status" value="1"/>
</dbReference>
<dbReference type="PANTHER" id="PTHR11557:SF0">
    <property type="entry name" value="PORPHOBILINOGEN DEAMINASE"/>
    <property type="match status" value="1"/>
</dbReference>
<dbReference type="Pfam" id="PF01379">
    <property type="entry name" value="Porphobil_deam"/>
    <property type="match status" value="1"/>
</dbReference>
<dbReference type="Pfam" id="PF03900">
    <property type="entry name" value="Porphobil_deamC"/>
    <property type="match status" value="1"/>
</dbReference>
<dbReference type="PIRSF" id="PIRSF001438">
    <property type="entry name" value="4pyrrol_synth_OHMeBilane_synth"/>
    <property type="match status" value="1"/>
</dbReference>
<dbReference type="PRINTS" id="PR00151">
    <property type="entry name" value="PORPHBDMNASE"/>
</dbReference>
<dbReference type="SUPFAM" id="SSF53850">
    <property type="entry name" value="Periplasmic binding protein-like II"/>
    <property type="match status" value="1"/>
</dbReference>
<dbReference type="SUPFAM" id="SSF54782">
    <property type="entry name" value="Porphobilinogen deaminase (hydroxymethylbilane synthase), C-terminal domain"/>
    <property type="match status" value="1"/>
</dbReference>
<dbReference type="PROSITE" id="PS00533">
    <property type="entry name" value="PORPHOBILINOGEN_DEAM"/>
    <property type="match status" value="1"/>
</dbReference>
<name>HEM3_RUBXD</name>
<reference key="1">
    <citation type="submission" date="2006-06" db="EMBL/GenBank/DDBJ databases">
        <title>Complete sequence of Rubrobacter xylanophilus DSM 9941.</title>
        <authorList>
            <consortium name="US DOE Joint Genome Institute"/>
            <person name="Copeland A."/>
            <person name="Lucas S."/>
            <person name="Lapidus A."/>
            <person name="Barry K."/>
            <person name="Detter J.C."/>
            <person name="Glavina del Rio T."/>
            <person name="Hammon N."/>
            <person name="Israni S."/>
            <person name="Dalin E."/>
            <person name="Tice H."/>
            <person name="Pitluck S."/>
            <person name="Munk A.C."/>
            <person name="Brettin T."/>
            <person name="Bruce D."/>
            <person name="Han C."/>
            <person name="Tapia R."/>
            <person name="Gilna P."/>
            <person name="Schmutz J."/>
            <person name="Larimer F."/>
            <person name="Land M."/>
            <person name="Hauser L."/>
            <person name="Kyrpides N."/>
            <person name="Lykidis A."/>
            <person name="da Costa M.S."/>
            <person name="Rainey F.A."/>
            <person name="Empadinhas N."/>
            <person name="Jolivet E."/>
            <person name="Battista J.R."/>
            <person name="Richardson P."/>
        </authorList>
    </citation>
    <scope>NUCLEOTIDE SEQUENCE [LARGE SCALE GENOMIC DNA]</scope>
    <source>
        <strain>DSM 9941 / JCM 11954 / NBRC 16129 / PRD-1</strain>
    </source>
</reference>
<proteinExistence type="inferred from homology"/>
<accession>Q1AUK3</accession>